<dbReference type="EMBL" id="CR760020">
    <property type="protein sequence ID" value="CAJ82394.1"/>
    <property type="molecule type" value="mRNA"/>
</dbReference>
<dbReference type="RefSeq" id="NP_001016733.1">
    <property type="nucleotide sequence ID" value="NM_001016733.2"/>
</dbReference>
<dbReference type="RefSeq" id="XP_012823893.1">
    <property type="nucleotide sequence ID" value="XM_012968439.2"/>
</dbReference>
<dbReference type="SMR" id="Q28J76"/>
<dbReference type="FunCoup" id="Q28J76">
    <property type="interactions" value="852"/>
</dbReference>
<dbReference type="PaxDb" id="8364-ENSXETP00000009421"/>
<dbReference type="GeneID" id="549487"/>
<dbReference type="KEGG" id="xtr:549487"/>
<dbReference type="AGR" id="Xenbase:XB-GENE-965912"/>
<dbReference type="CTD" id="139231"/>
<dbReference type="Xenbase" id="XB-GENE-965912">
    <property type="gene designation" value="fam199x"/>
</dbReference>
<dbReference type="eggNOG" id="ENOG502QR59">
    <property type="taxonomic scope" value="Eukaryota"/>
</dbReference>
<dbReference type="HOGENOM" id="CLU_061935_0_0_1"/>
<dbReference type="InParanoid" id="Q28J76"/>
<dbReference type="OMA" id="PWKRSSY"/>
<dbReference type="OrthoDB" id="6365484at2759"/>
<dbReference type="PhylomeDB" id="Q28J76"/>
<dbReference type="Proteomes" id="UP000008143">
    <property type="component" value="Chromosome 8"/>
</dbReference>
<dbReference type="Bgee" id="ENSXETG00000004327">
    <property type="expression patterns" value="Expressed in brain and 13 other cell types or tissues"/>
</dbReference>
<dbReference type="InterPro" id="IPR029672">
    <property type="entry name" value="FAM199X_fam"/>
</dbReference>
<dbReference type="PANTHER" id="PTHR32003">
    <property type="entry name" value="PROTEIN FAM199X"/>
    <property type="match status" value="1"/>
</dbReference>
<dbReference type="PANTHER" id="PTHR32003:SF1">
    <property type="entry name" value="PROTEIN FAM199X"/>
    <property type="match status" value="1"/>
</dbReference>
<dbReference type="Pfam" id="PF15814">
    <property type="entry name" value="FAM199X"/>
    <property type="match status" value="1"/>
</dbReference>
<accession>Q28J76</accession>
<name>F199X_XENTR</name>
<gene>
    <name type="primary">fam199x</name>
    <name type="ORF">TNeu080p02.1</name>
</gene>
<sequence length="376" mass="41744">MSEGLYEKFLAPDEPFPLLSQRGSASEEGCLDVSDFGCQLSSCHRTDPLHRFHSNRWNLTSCGTSVASSECSEELFSSVSVGDQDDCYSLLDDQDFTSFDLFPEGSVCSDVSSSISTYWDWSDSEFEWQLPGSDIASGSDVLSDIIPSIPSSPCLPSRKKNKHRNLDELPWSAMTNDEQVEYIEYLSRKVSTEMGLREQLDIIKIIDPTAQISPTDSEFIIELNCLTDEKLKQVRSYIKEHSPRQRSTRESWKRTSYSTASTSGVSGASVSSSSASMVSTASSTGSSGGNSASNSSANMSRTHSDSNLSASAAERIRDSKKRSKQRKLQQKALRKRQLKEQRQARKERLSGLFLNEEVLSVKVNEEDHEGDVDVLM</sequence>
<feature type="chain" id="PRO_0000251215" description="Protein FAM199X">
    <location>
        <begin position="1"/>
        <end position="376"/>
    </location>
</feature>
<feature type="region of interest" description="Disordered" evidence="2">
    <location>
        <begin position="237"/>
        <end position="350"/>
    </location>
</feature>
<feature type="coiled-coil region" evidence="1">
    <location>
        <begin position="320"/>
        <end position="349"/>
    </location>
</feature>
<feature type="compositionally biased region" description="Basic and acidic residues" evidence="2">
    <location>
        <begin position="237"/>
        <end position="253"/>
    </location>
</feature>
<feature type="compositionally biased region" description="Low complexity" evidence="2">
    <location>
        <begin position="255"/>
        <end position="300"/>
    </location>
</feature>
<feature type="compositionally biased region" description="Basic residues" evidence="2">
    <location>
        <begin position="318"/>
        <end position="337"/>
    </location>
</feature>
<feature type="compositionally biased region" description="Basic and acidic residues" evidence="2">
    <location>
        <begin position="338"/>
        <end position="349"/>
    </location>
</feature>
<organism>
    <name type="scientific">Xenopus tropicalis</name>
    <name type="common">Western clawed frog</name>
    <name type="synonym">Silurana tropicalis</name>
    <dbReference type="NCBI Taxonomy" id="8364"/>
    <lineage>
        <taxon>Eukaryota</taxon>
        <taxon>Metazoa</taxon>
        <taxon>Chordata</taxon>
        <taxon>Craniata</taxon>
        <taxon>Vertebrata</taxon>
        <taxon>Euteleostomi</taxon>
        <taxon>Amphibia</taxon>
        <taxon>Batrachia</taxon>
        <taxon>Anura</taxon>
        <taxon>Pipoidea</taxon>
        <taxon>Pipidae</taxon>
        <taxon>Xenopodinae</taxon>
        <taxon>Xenopus</taxon>
        <taxon>Silurana</taxon>
    </lineage>
</organism>
<evidence type="ECO:0000255" key="1"/>
<evidence type="ECO:0000256" key="2">
    <source>
        <dbReference type="SAM" id="MobiDB-lite"/>
    </source>
</evidence>
<evidence type="ECO:0000305" key="3"/>
<comment type="similarity">
    <text evidence="3">Belongs to the FAM199 family.</text>
</comment>
<reference key="1">
    <citation type="submission" date="2006-06" db="EMBL/GenBank/DDBJ databases">
        <authorList>
            <consortium name="Sanger Xenopus tropicalis EST/cDNA project"/>
        </authorList>
    </citation>
    <scope>NUCLEOTIDE SEQUENCE [LARGE SCALE MRNA]</scope>
    <source>
        <tissue>Neurula</tissue>
    </source>
</reference>
<proteinExistence type="evidence at transcript level"/>
<protein>
    <recommendedName>
        <fullName>Protein FAM199X</fullName>
    </recommendedName>
</protein>
<keyword id="KW-0175">Coiled coil</keyword>
<keyword id="KW-1185">Reference proteome</keyword>